<organism>
    <name type="scientific">Sporosarcina psychrophila</name>
    <name type="common">Bacillus psychrophilus</name>
    <dbReference type="NCBI Taxonomy" id="1476"/>
    <lineage>
        <taxon>Bacteria</taxon>
        <taxon>Bacillati</taxon>
        <taxon>Bacillota</taxon>
        <taxon>Bacilli</taxon>
        <taxon>Bacillales</taxon>
        <taxon>Caryophanaceae</taxon>
        <taxon>Sporosarcina</taxon>
    </lineage>
</organism>
<accession>Q9S3M0</accession>
<evidence type="ECO:0000250" key="1"/>
<evidence type="ECO:0000255" key="2">
    <source>
        <dbReference type="PROSITE-ProRule" id="PRU01083"/>
    </source>
</evidence>
<evidence type="ECO:0000305" key="3"/>
<protein>
    <recommendedName>
        <fullName>Cytidine deaminase</fullName>
        <shortName>CDA</shortName>
        <ecNumber>3.5.4.5</ecNumber>
    </recommendedName>
    <alternativeName>
        <fullName>Cytidine aminohydrolase</fullName>
    </alternativeName>
</protein>
<sequence>MDVEKLIAESKKAREQAYVPYSKFPVGAALLAEDGTIYHGCNIENSAYSMTNCAERTAFFKAVSDGVRSFKALAVVADTEGPVSPCGACRQVIAEFCNGSMPVYLTNLKGDIEETTVAKLLPGAFSKEDLSYAAEQ</sequence>
<proteinExistence type="inferred from homology"/>
<feature type="chain" id="PRO_0000171677" description="Cytidine deaminase">
    <location>
        <begin position="1"/>
        <end position="136"/>
    </location>
</feature>
<feature type="domain" description="CMP/dCMP-type deaminase" evidence="2">
    <location>
        <begin position="1"/>
        <end position="128"/>
    </location>
</feature>
<feature type="active site" description="Proton donor" evidence="1">
    <location>
        <position position="55"/>
    </location>
</feature>
<feature type="binding site" evidence="1">
    <location>
        <begin position="42"/>
        <end position="44"/>
    </location>
    <ligand>
        <name>substrate</name>
    </ligand>
</feature>
<feature type="binding site" evidence="1">
    <location>
        <position position="53"/>
    </location>
    <ligand>
        <name>Zn(2+)</name>
        <dbReference type="ChEBI" id="CHEBI:29105"/>
        <note>catalytic</note>
    </ligand>
</feature>
<feature type="binding site" evidence="1">
    <location>
        <position position="86"/>
    </location>
    <ligand>
        <name>Zn(2+)</name>
        <dbReference type="ChEBI" id="CHEBI:29105"/>
        <note>catalytic</note>
    </ligand>
</feature>
<feature type="binding site" evidence="1">
    <location>
        <position position="89"/>
    </location>
    <ligand>
        <name>Zn(2+)</name>
        <dbReference type="ChEBI" id="CHEBI:29105"/>
        <note>catalytic</note>
    </ligand>
</feature>
<comment type="function">
    <text evidence="1">This enzyme scavenges exogenous and endogenous cytidine and 2'-deoxycytidine for UMP synthesis.</text>
</comment>
<comment type="catalytic activity">
    <reaction>
        <text>cytidine + H2O + H(+) = uridine + NH4(+)</text>
        <dbReference type="Rhea" id="RHEA:16069"/>
        <dbReference type="ChEBI" id="CHEBI:15377"/>
        <dbReference type="ChEBI" id="CHEBI:15378"/>
        <dbReference type="ChEBI" id="CHEBI:16704"/>
        <dbReference type="ChEBI" id="CHEBI:17562"/>
        <dbReference type="ChEBI" id="CHEBI:28938"/>
        <dbReference type="EC" id="3.5.4.5"/>
    </reaction>
</comment>
<comment type="catalytic activity">
    <reaction>
        <text>2'-deoxycytidine + H2O + H(+) = 2'-deoxyuridine + NH4(+)</text>
        <dbReference type="Rhea" id="RHEA:13433"/>
        <dbReference type="ChEBI" id="CHEBI:15377"/>
        <dbReference type="ChEBI" id="CHEBI:15378"/>
        <dbReference type="ChEBI" id="CHEBI:15698"/>
        <dbReference type="ChEBI" id="CHEBI:16450"/>
        <dbReference type="ChEBI" id="CHEBI:28938"/>
        <dbReference type="EC" id="3.5.4.5"/>
    </reaction>
</comment>
<comment type="cofactor">
    <cofactor evidence="1">
        <name>Zn(2+)</name>
        <dbReference type="ChEBI" id="CHEBI:29105"/>
    </cofactor>
</comment>
<comment type="similarity">
    <text evidence="3">Belongs to the cytidine and deoxycytidylate deaminase family.</text>
</comment>
<dbReference type="EC" id="3.5.4.5"/>
<dbReference type="EMBL" id="AJ237978">
    <property type="protein sequence ID" value="CAB51906.1"/>
    <property type="molecule type" value="Genomic_DNA"/>
</dbReference>
<dbReference type="RefSeq" id="WP_067208391.1">
    <property type="nucleotide sequence ID" value="NZ_CP146246.1"/>
</dbReference>
<dbReference type="SMR" id="Q9S3M0"/>
<dbReference type="STRING" id="1476.AZE41_09240"/>
<dbReference type="KEGG" id="spsy:AZE41_09240"/>
<dbReference type="OrthoDB" id="9795347at2"/>
<dbReference type="BRENDA" id="3.5.4.5">
    <property type="organism ID" value="685"/>
</dbReference>
<dbReference type="GO" id="GO:0005829">
    <property type="term" value="C:cytosol"/>
    <property type="evidence" value="ECO:0007669"/>
    <property type="project" value="TreeGrafter"/>
</dbReference>
<dbReference type="GO" id="GO:0004126">
    <property type="term" value="F:cytidine deaminase activity"/>
    <property type="evidence" value="ECO:0007669"/>
    <property type="project" value="UniProtKB-EC"/>
</dbReference>
<dbReference type="GO" id="GO:0008270">
    <property type="term" value="F:zinc ion binding"/>
    <property type="evidence" value="ECO:0007669"/>
    <property type="project" value="InterPro"/>
</dbReference>
<dbReference type="GO" id="GO:0009972">
    <property type="term" value="P:cytidine deamination"/>
    <property type="evidence" value="ECO:0007669"/>
    <property type="project" value="InterPro"/>
</dbReference>
<dbReference type="CDD" id="cd01283">
    <property type="entry name" value="cytidine_deaminase"/>
    <property type="match status" value="1"/>
</dbReference>
<dbReference type="FunFam" id="3.40.140.10:FF:000008">
    <property type="entry name" value="Cytidine deaminase"/>
    <property type="match status" value="1"/>
</dbReference>
<dbReference type="Gene3D" id="3.40.140.10">
    <property type="entry name" value="Cytidine Deaminase, domain 2"/>
    <property type="match status" value="1"/>
</dbReference>
<dbReference type="InterPro" id="IPR002125">
    <property type="entry name" value="CMP_dCMP_dom"/>
</dbReference>
<dbReference type="InterPro" id="IPR050202">
    <property type="entry name" value="Cyt/Deoxycyt_deaminase"/>
</dbReference>
<dbReference type="InterPro" id="IPR006262">
    <property type="entry name" value="Cyt_deam_tetra"/>
</dbReference>
<dbReference type="InterPro" id="IPR016193">
    <property type="entry name" value="Cytidine_deaminase-like"/>
</dbReference>
<dbReference type="NCBIfam" id="TIGR01354">
    <property type="entry name" value="cyt_deam_tetra"/>
    <property type="match status" value="1"/>
</dbReference>
<dbReference type="NCBIfam" id="NF004064">
    <property type="entry name" value="PRK05578.1"/>
    <property type="match status" value="1"/>
</dbReference>
<dbReference type="PANTHER" id="PTHR11644">
    <property type="entry name" value="CYTIDINE DEAMINASE"/>
    <property type="match status" value="1"/>
</dbReference>
<dbReference type="PANTHER" id="PTHR11644:SF2">
    <property type="entry name" value="CYTIDINE DEAMINASE"/>
    <property type="match status" value="1"/>
</dbReference>
<dbReference type="Pfam" id="PF00383">
    <property type="entry name" value="dCMP_cyt_deam_1"/>
    <property type="match status" value="1"/>
</dbReference>
<dbReference type="SUPFAM" id="SSF53927">
    <property type="entry name" value="Cytidine deaminase-like"/>
    <property type="match status" value="1"/>
</dbReference>
<dbReference type="PROSITE" id="PS51747">
    <property type="entry name" value="CYT_DCMP_DEAMINASES_2"/>
    <property type="match status" value="1"/>
</dbReference>
<reference key="1">
    <citation type="journal article" date="2001" name="Protein Eng.">
        <title>Cytidine deaminase from two extremophilic bacteria: cloning, expression and comparison of their structural stability.</title>
        <authorList>
            <person name="Cambi A."/>
            <person name="Vincenzetti S."/>
            <person name="De Sanctis G."/>
            <person name="Neuhard J."/>
            <person name="Natalini P."/>
            <person name="Vita A."/>
        </authorList>
    </citation>
    <scope>NUCLEOTIDE SEQUENCE [GENOMIC DNA]</scope>
</reference>
<keyword id="KW-0378">Hydrolase</keyword>
<keyword id="KW-0479">Metal-binding</keyword>
<keyword id="KW-0862">Zinc</keyword>
<gene>
    <name type="primary">cdd</name>
</gene>
<name>CDD_SPOPS</name>